<gene>
    <name type="primary">mnhD1</name>
    <name type="ordered locus">SSP1826</name>
</gene>
<reference key="1">
    <citation type="journal article" date="2005" name="Proc. Natl. Acad. Sci. U.S.A.">
        <title>Whole genome sequence of Staphylococcus saprophyticus reveals the pathogenesis of uncomplicated urinary tract infection.</title>
        <authorList>
            <person name="Kuroda M."/>
            <person name="Yamashita A."/>
            <person name="Hirakawa H."/>
            <person name="Kumano M."/>
            <person name="Morikawa K."/>
            <person name="Higashide M."/>
            <person name="Maruyama A."/>
            <person name="Inose Y."/>
            <person name="Matoba K."/>
            <person name="Toh H."/>
            <person name="Kuhara S."/>
            <person name="Hattori M."/>
            <person name="Ohta T."/>
        </authorList>
    </citation>
    <scope>NUCLEOTIDE SEQUENCE [LARGE SCALE GENOMIC DNA]</scope>
    <source>
        <strain>ATCC 15305 / DSM 20229 / NCIMB 8711 / NCTC 7292 / S-41</strain>
    </source>
</reference>
<proteinExistence type="inferred from homology"/>
<comment type="function">
    <text evidence="1">Mnh complex is a Na(+)/H(+) antiporter involved in Na(+) excretion.</text>
</comment>
<comment type="subunit">
    <text evidence="1">May form a heterooligomeric complex that consists of seven subunits: mnhA1, mnhB1, mnhC1, mnhD1, mnhE1, mnhF1 and mnhG1.</text>
</comment>
<comment type="subcellular location">
    <subcellularLocation>
        <location evidence="3">Cell membrane</location>
        <topology evidence="3">Multi-pass membrane protein</topology>
    </subcellularLocation>
</comment>
<comment type="similarity">
    <text evidence="3">Belongs to the CPA3 antiporters (TC 2.A.63) subunit D family.</text>
</comment>
<protein>
    <recommendedName>
        <fullName>Na(+)/H(+) antiporter subunit D1</fullName>
    </recommendedName>
    <alternativeName>
        <fullName>Mnh complex subunit D1</fullName>
    </alternativeName>
</protein>
<keyword id="KW-0050">Antiport</keyword>
<keyword id="KW-1003">Cell membrane</keyword>
<keyword id="KW-0375">Hydrogen ion transport</keyword>
<keyword id="KW-0406">Ion transport</keyword>
<keyword id="KW-0472">Membrane</keyword>
<keyword id="KW-1185">Reference proteome</keyword>
<keyword id="KW-0915">Sodium</keyword>
<keyword id="KW-0739">Sodium transport</keyword>
<keyword id="KW-0812">Transmembrane</keyword>
<keyword id="KW-1133">Transmembrane helix</keyword>
<keyword id="KW-0813">Transport</keyword>
<sequence>MIESNLIISLLVIPMITIIALIFIGKRPKIKRYVALAGTALTLIFAFINLNNVLKDGPITLELGSWDAPYSIVFVLDIFSALLVITSLIVTMLIILYSYQSVGIERETYYYYFAVMFMLTGVIGSFITGDIFNLFVFFEVFLMASYILLVIGGTKVQLSETIKYVLVNVTSSAFFVIAVAMLYSVVGTLNLADISEKLSQLPSQDSGIVTIIFILFIFVFATKAGAFPMYIWLPGAYYAPPIAIIAFFGALLTKVGIYAIARTASLFFRDTSNFSFYTILFLALLTIIFGCVGAISYFDTKKIILYNIMIAVGVILVGVAMMNQTGMMGAIYYTLHDMLIKAALFFLIGVMYKITKTHDLRKYGGLIKDYPVLGWTFFIAALSLAGIPPLSGFYGKYYIVQATFEKGFYLSGIVVLLSSLVVLYSVIRIFLQGFFGKSEGYQVNPKLQYKGILTVSIVAVVISVIFGLSADWLQPIIKDAAETFYNPSVYTDSVLGGK</sequence>
<feature type="chain" id="PRO_0000372140" description="Na(+)/H(+) antiporter subunit D1">
    <location>
        <begin position="1"/>
        <end position="498"/>
    </location>
</feature>
<feature type="transmembrane region" description="Helical" evidence="2">
    <location>
        <begin position="5"/>
        <end position="25"/>
    </location>
</feature>
<feature type="transmembrane region" description="Helical" evidence="2">
    <location>
        <begin position="34"/>
        <end position="54"/>
    </location>
</feature>
<feature type="transmembrane region" description="Helical" evidence="2">
    <location>
        <begin position="75"/>
        <end position="95"/>
    </location>
</feature>
<feature type="transmembrane region" description="Helical" evidence="2">
    <location>
        <begin position="109"/>
        <end position="129"/>
    </location>
</feature>
<feature type="transmembrane region" description="Helical" evidence="2">
    <location>
        <begin position="131"/>
        <end position="151"/>
    </location>
</feature>
<feature type="transmembrane region" description="Helical" evidence="2">
    <location>
        <begin position="174"/>
        <end position="194"/>
    </location>
</feature>
<feature type="transmembrane region" description="Helical" evidence="2">
    <location>
        <begin position="207"/>
        <end position="227"/>
    </location>
</feature>
<feature type="transmembrane region" description="Helical" evidence="2">
    <location>
        <begin position="231"/>
        <end position="251"/>
    </location>
</feature>
<feature type="transmembrane region" description="Helical" evidence="2">
    <location>
        <begin position="275"/>
        <end position="295"/>
    </location>
</feature>
<feature type="transmembrane region" description="Helical" evidence="2">
    <location>
        <begin position="303"/>
        <end position="323"/>
    </location>
</feature>
<feature type="transmembrane region" description="Helical" evidence="2">
    <location>
        <begin position="331"/>
        <end position="351"/>
    </location>
</feature>
<feature type="transmembrane region" description="Helical" evidence="2">
    <location>
        <begin position="373"/>
        <end position="393"/>
    </location>
</feature>
<feature type="transmembrane region" description="Helical" evidence="2">
    <location>
        <begin position="407"/>
        <end position="427"/>
    </location>
</feature>
<feature type="transmembrane region" description="Helical" evidence="2">
    <location>
        <begin position="452"/>
        <end position="472"/>
    </location>
</feature>
<evidence type="ECO:0000250" key="1"/>
<evidence type="ECO:0000255" key="2"/>
<evidence type="ECO:0000305" key="3"/>
<organism>
    <name type="scientific">Staphylococcus saprophyticus subsp. saprophyticus (strain ATCC 15305 / DSM 20229 / NCIMB 8711 / NCTC 7292 / S-41)</name>
    <dbReference type="NCBI Taxonomy" id="342451"/>
    <lineage>
        <taxon>Bacteria</taxon>
        <taxon>Bacillati</taxon>
        <taxon>Bacillota</taxon>
        <taxon>Bacilli</taxon>
        <taxon>Bacillales</taxon>
        <taxon>Staphylococcaceae</taxon>
        <taxon>Staphylococcus</taxon>
    </lineage>
</organism>
<name>MNHD1_STAS1</name>
<dbReference type="EMBL" id="AP008934">
    <property type="protein sequence ID" value="BAE18971.1"/>
    <property type="molecule type" value="Genomic_DNA"/>
</dbReference>
<dbReference type="RefSeq" id="WP_011303516.1">
    <property type="nucleotide sequence ID" value="NC_007350.1"/>
</dbReference>
<dbReference type="SMR" id="Q49W88"/>
<dbReference type="DNASU" id="3616481"/>
<dbReference type="GeneID" id="3616481"/>
<dbReference type="KEGG" id="ssp:SSP1826"/>
<dbReference type="PATRIC" id="fig|342451.11.peg.1822"/>
<dbReference type="eggNOG" id="COG0651">
    <property type="taxonomic scope" value="Bacteria"/>
</dbReference>
<dbReference type="HOGENOM" id="CLU_007100_9_2_9"/>
<dbReference type="OrthoDB" id="9811718at2"/>
<dbReference type="Proteomes" id="UP000006371">
    <property type="component" value="Chromosome"/>
</dbReference>
<dbReference type="GO" id="GO:0005886">
    <property type="term" value="C:plasma membrane"/>
    <property type="evidence" value="ECO:0007669"/>
    <property type="project" value="UniProtKB-SubCell"/>
</dbReference>
<dbReference type="GO" id="GO:0015297">
    <property type="term" value="F:antiporter activity"/>
    <property type="evidence" value="ECO:0007669"/>
    <property type="project" value="UniProtKB-KW"/>
</dbReference>
<dbReference type="GO" id="GO:0008137">
    <property type="term" value="F:NADH dehydrogenase (ubiquinone) activity"/>
    <property type="evidence" value="ECO:0007669"/>
    <property type="project" value="InterPro"/>
</dbReference>
<dbReference type="GO" id="GO:0042773">
    <property type="term" value="P:ATP synthesis coupled electron transport"/>
    <property type="evidence" value="ECO:0007669"/>
    <property type="project" value="InterPro"/>
</dbReference>
<dbReference type="GO" id="GO:0006814">
    <property type="term" value="P:sodium ion transport"/>
    <property type="evidence" value="ECO:0007669"/>
    <property type="project" value="UniProtKB-KW"/>
</dbReference>
<dbReference type="InterPro" id="IPR050586">
    <property type="entry name" value="CPA3_Na-H_Antiporter_D"/>
</dbReference>
<dbReference type="InterPro" id="IPR003918">
    <property type="entry name" value="NADH_UbQ_OxRdtase"/>
</dbReference>
<dbReference type="InterPro" id="IPR001750">
    <property type="entry name" value="ND/Mrp_TM"/>
</dbReference>
<dbReference type="NCBIfam" id="NF005818">
    <property type="entry name" value="PRK07691.1"/>
    <property type="match status" value="1"/>
</dbReference>
<dbReference type="PANTHER" id="PTHR42703:SF1">
    <property type="entry name" value="NA(+)_H(+) ANTIPORTER SUBUNIT D1"/>
    <property type="match status" value="1"/>
</dbReference>
<dbReference type="PANTHER" id="PTHR42703">
    <property type="entry name" value="NADH DEHYDROGENASE"/>
    <property type="match status" value="1"/>
</dbReference>
<dbReference type="Pfam" id="PF00361">
    <property type="entry name" value="Proton_antipo_M"/>
    <property type="match status" value="1"/>
</dbReference>
<dbReference type="PRINTS" id="PR01437">
    <property type="entry name" value="NUOXDRDTASE4"/>
</dbReference>
<accession>Q49W88</accession>